<dbReference type="EC" id="2.7.1.33" evidence="1"/>
<dbReference type="EMBL" id="CP001120">
    <property type="protein sequence ID" value="ACF68872.1"/>
    <property type="molecule type" value="Genomic_DNA"/>
</dbReference>
<dbReference type="RefSeq" id="WP_000023069.1">
    <property type="nucleotide sequence ID" value="NC_011083.1"/>
</dbReference>
<dbReference type="SMR" id="B4TCR5"/>
<dbReference type="KEGG" id="seh:SeHA_C4469"/>
<dbReference type="HOGENOM" id="CLU_053818_1_1_6"/>
<dbReference type="UniPathway" id="UPA00241">
    <property type="reaction ID" value="UER00352"/>
</dbReference>
<dbReference type="Proteomes" id="UP000001866">
    <property type="component" value="Chromosome"/>
</dbReference>
<dbReference type="GO" id="GO:0005737">
    <property type="term" value="C:cytoplasm"/>
    <property type="evidence" value="ECO:0007669"/>
    <property type="project" value="UniProtKB-SubCell"/>
</dbReference>
<dbReference type="GO" id="GO:0005524">
    <property type="term" value="F:ATP binding"/>
    <property type="evidence" value="ECO:0007669"/>
    <property type="project" value="UniProtKB-UniRule"/>
</dbReference>
<dbReference type="GO" id="GO:0004594">
    <property type="term" value="F:pantothenate kinase activity"/>
    <property type="evidence" value="ECO:0007669"/>
    <property type="project" value="UniProtKB-UniRule"/>
</dbReference>
<dbReference type="GO" id="GO:0015937">
    <property type="term" value="P:coenzyme A biosynthetic process"/>
    <property type="evidence" value="ECO:0007669"/>
    <property type="project" value="UniProtKB-UniRule"/>
</dbReference>
<dbReference type="CDD" id="cd02025">
    <property type="entry name" value="PanK"/>
    <property type="match status" value="1"/>
</dbReference>
<dbReference type="FunFam" id="3.40.50.300:FF:000242">
    <property type="entry name" value="Pantothenate kinase"/>
    <property type="match status" value="1"/>
</dbReference>
<dbReference type="Gene3D" id="3.40.50.300">
    <property type="entry name" value="P-loop containing nucleotide triphosphate hydrolases"/>
    <property type="match status" value="1"/>
</dbReference>
<dbReference type="HAMAP" id="MF_00215">
    <property type="entry name" value="Pantothen_kinase_1"/>
    <property type="match status" value="1"/>
</dbReference>
<dbReference type="InterPro" id="IPR027417">
    <property type="entry name" value="P-loop_NTPase"/>
</dbReference>
<dbReference type="InterPro" id="IPR004566">
    <property type="entry name" value="PanK"/>
</dbReference>
<dbReference type="InterPro" id="IPR006083">
    <property type="entry name" value="PRK/URK"/>
</dbReference>
<dbReference type="NCBIfam" id="TIGR00554">
    <property type="entry name" value="panK_bact"/>
    <property type="match status" value="1"/>
</dbReference>
<dbReference type="PANTHER" id="PTHR10285">
    <property type="entry name" value="URIDINE KINASE"/>
    <property type="match status" value="1"/>
</dbReference>
<dbReference type="Pfam" id="PF00485">
    <property type="entry name" value="PRK"/>
    <property type="match status" value="1"/>
</dbReference>
<dbReference type="PIRSF" id="PIRSF000545">
    <property type="entry name" value="Pantothenate_kin"/>
    <property type="match status" value="1"/>
</dbReference>
<dbReference type="SUPFAM" id="SSF52540">
    <property type="entry name" value="P-loop containing nucleoside triphosphate hydrolases"/>
    <property type="match status" value="1"/>
</dbReference>
<gene>
    <name evidence="1" type="primary">coaA</name>
    <name type="ordered locus">SeHA_C4469</name>
</gene>
<evidence type="ECO:0000255" key="1">
    <source>
        <dbReference type="HAMAP-Rule" id="MF_00215"/>
    </source>
</evidence>
<organism>
    <name type="scientific">Salmonella heidelberg (strain SL476)</name>
    <dbReference type="NCBI Taxonomy" id="454169"/>
    <lineage>
        <taxon>Bacteria</taxon>
        <taxon>Pseudomonadati</taxon>
        <taxon>Pseudomonadota</taxon>
        <taxon>Gammaproteobacteria</taxon>
        <taxon>Enterobacterales</taxon>
        <taxon>Enterobacteriaceae</taxon>
        <taxon>Salmonella</taxon>
    </lineage>
</organism>
<reference key="1">
    <citation type="journal article" date="2011" name="J. Bacteriol.">
        <title>Comparative genomics of 28 Salmonella enterica isolates: evidence for CRISPR-mediated adaptive sublineage evolution.</title>
        <authorList>
            <person name="Fricke W.F."/>
            <person name="Mammel M.K."/>
            <person name="McDermott P.F."/>
            <person name="Tartera C."/>
            <person name="White D.G."/>
            <person name="Leclerc J.E."/>
            <person name="Ravel J."/>
            <person name="Cebula T.A."/>
        </authorList>
    </citation>
    <scope>NUCLEOTIDE SEQUENCE [LARGE SCALE GENOMIC DNA]</scope>
    <source>
        <strain>SL476</strain>
    </source>
</reference>
<proteinExistence type="inferred from homology"/>
<keyword id="KW-0067">ATP-binding</keyword>
<keyword id="KW-0173">Coenzyme A biosynthesis</keyword>
<keyword id="KW-0963">Cytoplasm</keyword>
<keyword id="KW-0418">Kinase</keyword>
<keyword id="KW-0547">Nucleotide-binding</keyword>
<keyword id="KW-0808">Transferase</keyword>
<comment type="catalytic activity">
    <reaction evidence="1">
        <text>(R)-pantothenate + ATP = (R)-4'-phosphopantothenate + ADP + H(+)</text>
        <dbReference type="Rhea" id="RHEA:16373"/>
        <dbReference type="ChEBI" id="CHEBI:10986"/>
        <dbReference type="ChEBI" id="CHEBI:15378"/>
        <dbReference type="ChEBI" id="CHEBI:29032"/>
        <dbReference type="ChEBI" id="CHEBI:30616"/>
        <dbReference type="ChEBI" id="CHEBI:456216"/>
        <dbReference type="EC" id="2.7.1.33"/>
    </reaction>
</comment>
<comment type="pathway">
    <text evidence="1">Cofactor biosynthesis; coenzyme A biosynthesis; CoA from (R)-pantothenate: step 1/5.</text>
</comment>
<comment type="subcellular location">
    <subcellularLocation>
        <location evidence="1">Cytoplasm</location>
    </subcellularLocation>
</comment>
<comment type="similarity">
    <text evidence="1">Belongs to the prokaryotic pantothenate kinase family.</text>
</comment>
<accession>B4TCR5</accession>
<protein>
    <recommendedName>
        <fullName evidence="1">Pantothenate kinase</fullName>
        <ecNumber evidence="1">2.7.1.33</ecNumber>
    </recommendedName>
    <alternativeName>
        <fullName evidence="1">Pantothenic acid kinase</fullName>
    </alternativeName>
</protein>
<name>COAA_SALHS</name>
<sequence>MSIKEQSLMTPYLQFDRSQWAALRDSVPMTLTEDEIAQLKGINEDLSLEEVAEIYLPLSRLLNFYISSNLRRQAVLEQFLGTNGQRIPYIISIAGSVAVGKSTTARVLQALLSRWPEHRRVELITTDGFLHPNQVLKERGLMKKKGFPESYDMHRLVKFVSDLKSGVPNVTAPVYSHLIYDVIPEGDKTVAQPDILILEGLNVLQSGMDYPHDPHHVFVSDFVDFSIYVDAPEELLQTWYINRFLKFREGAFTDPDSYFHNYAKLSKEEAVNTATSLWKEINWLNLKQNILPTRERASLIMTKSANHAVEQVRLRK</sequence>
<feature type="chain" id="PRO_1000099947" description="Pantothenate kinase">
    <location>
        <begin position="1"/>
        <end position="316"/>
    </location>
</feature>
<feature type="binding site" evidence="1">
    <location>
        <begin position="95"/>
        <end position="102"/>
    </location>
    <ligand>
        <name>ATP</name>
        <dbReference type="ChEBI" id="CHEBI:30616"/>
    </ligand>
</feature>